<protein>
    <recommendedName>
        <fullName>Interleukin-1 alpha</fullName>
        <shortName>IL-1 alpha</shortName>
    </recommendedName>
</protein>
<sequence>MAKVPDMFEDLKNCYSENEEDSSSIDHLFLNQKSFYDVSYGPLHESCMDQSVSLSISEISKTSKLSFKQSMVVVSTNGKVLKKRRLSLSQSIADDNLEAIANDSEEEIIKPRSAPFSFLSNMTYHIIRIIKHESILNDTLNQTIIRANDQYLTAAAIHNLDEAVKFDMGAYTSSKDDTKVPVILRISKTQLYVSAQDEDQPVLLKEMPEIPKTTTGGETNSLSSWETRGTKNYFISVAHPNLFIATKHDNWVCLAKGLPSITDFQILENQA</sequence>
<reference key="1">
    <citation type="journal article" date="1995" name="J. Immunol.">
        <title>Comparative sequence analysis of cytokine genes from human and nonhuman primates.</title>
        <authorList>
            <person name="Villinger F.J."/>
            <person name="Brar S.S."/>
            <person name="Mayne A.E."/>
            <person name="Chikkala N."/>
            <person name="Ansari A.A."/>
        </authorList>
    </citation>
    <scope>NUCLEOTIDE SEQUENCE [MRNA]</scope>
    <source>
        <tissue>Blood</tissue>
    </source>
</reference>
<dbReference type="EMBL" id="U19836">
    <property type="protein sequence ID" value="AAA86703.1"/>
    <property type="molecule type" value="mRNA"/>
</dbReference>
<dbReference type="SMR" id="P46647"/>
<dbReference type="STRING" id="9531.ENSCATP00000036036"/>
<dbReference type="GlyCosmos" id="P46647">
    <property type="glycosylation" value="2 sites, No reported glycans"/>
</dbReference>
<dbReference type="Proteomes" id="UP000233060">
    <property type="component" value="Unassembled WGS sequence"/>
</dbReference>
<dbReference type="GO" id="GO:0005829">
    <property type="term" value="C:cytosol"/>
    <property type="evidence" value="ECO:0000250"/>
    <property type="project" value="UniProtKB"/>
</dbReference>
<dbReference type="GO" id="GO:0005615">
    <property type="term" value="C:extracellular space"/>
    <property type="evidence" value="ECO:0000250"/>
    <property type="project" value="UniProtKB"/>
</dbReference>
<dbReference type="GO" id="GO:0005634">
    <property type="term" value="C:nucleus"/>
    <property type="evidence" value="ECO:0007669"/>
    <property type="project" value="UniProtKB-SubCell"/>
</dbReference>
<dbReference type="GO" id="GO:0005507">
    <property type="term" value="F:copper ion binding"/>
    <property type="evidence" value="ECO:0000250"/>
    <property type="project" value="UniProtKB"/>
</dbReference>
<dbReference type="GO" id="GO:0005125">
    <property type="term" value="F:cytokine activity"/>
    <property type="evidence" value="ECO:0007669"/>
    <property type="project" value="UniProtKB-KW"/>
</dbReference>
<dbReference type="GO" id="GO:0005149">
    <property type="term" value="F:interleukin-1 receptor binding"/>
    <property type="evidence" value="ECO:0007669"/>
    <property type="project" value="InterPro"/>
</dbReference>
<dbReference type="GO" id="GO:0034605">
    <property type="term" value="P:cellular response to heat"/>
    <property type="evidence" value="ECO:0000250"/>
    <property type="project" value="UniProtKB"/>
</dbReference>
<dbReference type="GO" id="GO:0071222">
    <property type="term" value="P:cellular response to lipopolysaccharide"/>
    <property type="evidence" value="ECO:0007669"/>
    <property type="project" value="TreeGrafter"/>
</dbReference>
<dbReference type="GO" id="GO:0019221">
    <property type="term" value="P:cytokine-mediated signaling pathway"/>
    <property type="evidence" value="ECO:0007669"/>
    <property type="project" value="TreeGrafter"/>
</dbReference>
<dbReference type="GO" id="GO:0001660">
    <property type="term" value="P:fever generation"/>
    <property type="evidence" value="ECO:0007669"/>
    <property type="project" value="UniProtKB-KW"/>
</dbReference>
<dbReference type="GO" id="GO:0006955">
    <property type="term" value="P:immune response"/>
    <property type="evidence" value="ECO:0007669"/>
    <property type="project" value="InterPro"/>
</dbReference>
<dbReference type="GO" id="GO:0051781">
    <property type="term" value="P:positive regulation of cell division"/>
    <property type="evidence" value="ECO:0007669"/>
    <property type="project" value="UniProtKB-KW"/>
</dbReference>
<dbReference type="GO" id="GO:0001819">
    <property type="term" value="P:positive regulation of cytokine production"/>
    <property type="evidence" value="ECO:0007669"/>
    <property type="project" value="UniProtKB-ARBA"/>
</dbReference>
<dbReference type="GO" id="GO:0033092">
    <property type="term" value="P:positive regulation of immature T cell proliferation in thymus"/>
    <property type="evidence" value="ECO:0007669"/>
    <property type="project" value="TreeGrafter"/>
</dbReference>
<dbReference type="GO" id="GO:0046688">
    <property type="term" value="P:response to copper ion"/>
    <property type="evidence" value="ECO:0000250"/>
    <property type="project" value="UniProtKB"/>
</dbReference>
<dbReference type="CDD" id="cd23295">
    <property type="entry name" value="beta-trefoil_IL1A"/>
    <property type="match status" value="1"/>
</dbReference>
<dbReference type="FunFam" id="2.80.10.50:FF:000049">
    <property type="entry name" value="Interleukin-1 alpha"/>
    <property type="match status" value="1"/>
</dbReference>
<dbReference type="Gene3D" id="2.80.10.50">
    <property type="match status" value="1"/>
</dbReference>
<dbReference type="InterPro" id="IPR003295">
    <property type="entry name" value="IL-1_alpha"/>
</dbReference>
<dbReference type="InterPro" id="IPR020877">
    <property type="entry name" value="IL-1_CS"/>
</dbReference>
<dbReference type="InterPro" id="IPR000975">
    <property type="entry name" value="IL-1_fam"/>
</dbReference>
<dbReference type="InterPro" id="IPR003502">
    <property type="entry name" value="IL-1_propep"/>
</dbReference>
<dbReference type="InterPro" id="IPR008996">
    <property type="entry name" value="IL1/FGF"/>
</dbReference>
<dbReference type="PANTHER" id="PTHR10078:SF33">
    <property type="entry name" value="INTERLEUKIN-1 ALPHA"/>
    <property type="match status" value="1"/>
</dbReference>
<dbReference type="PANTHER" id="PTHR10078">
    <property type="entry name" value="INTERLEUKIN-1 FAMILY MEMBER"/>
    <property type="match status" value="1"/>
</dbReference>
<dbReference type="Pfam" id="PF00340">
    <property type="entry name" value="IL1"/>
    <property type="match status" value="1"/>
</dbReference>
<dbReference type="Pfam" id="PF02394">
    <property type="entry name" value="IL1_propep"/>
    <property type="match status" value="1"/>
</dbReference>
<dbReference type="PRINTS" id="PR00264">
    <property type="entry name" value="INTERLEUKIN1"/>
</dbReference>
<dbReference type="PRINTS" id="PR01358">
    <property type="entry name" value="INTRLEUKIN1A"/>
</dbReference>
<dbReference type="PRINTS" id="PR01357">
    <property type="entry name" value="INTRLEUKN1AB"/>
</dbReference>
<dbReference type="SMART" id="SM00125">
    <property type="entry name" value="IL1"/>
    <property type="match status" value="1"/>
</dbReference>
<dbReference type="SUPFAM" id="SSF50353">
    <property type="entry name" value="Cytokine"/>
    <property type="match status" value="1"/>
</dbReference>
<dbReference type="PROSITE" id="PS00253">
    <property type="entry name" value="INTERLEUKIN_1"/>
    <property type="match status" value="1"/>
</dbReference>
<name>IL1A_CERAT</name>
<accession>P46647</accession>
<keyword id="KW-0007">Acetylation</keyword>
<keyword id="KW-0202">Cytokine</keyword>
<keyword id="KW-0963">Cytoplasm</keyword>
<keyword id="KW-0325">Glycoprotein</keyword>
<keyword id="KW-0395">Inflammatory response</keyword>
<keyword id="KW-0497">Mitogen</keyword>
<keyword id="KW-0539">Nucleus</keyword>
<keyword id="KW-0597">Phosphoprotein</keyword>
<keyword id="KW-0666">Pyrogen</keyword>
<keyword id="KW-1185">Reference proteome</keyword>
<keyword id="KW-0964">Secreted</keyword>
<feature type="propeptide" id="PRO_0000015259" evidence="1">
    <location>
        <begin position="1"/>
        <end position="112"/>
    </location>
</feature>
<feature type="chain" id="PRO_0000015260" description="Interleukin-1 alpha">
    <location>
        <begin position="113"/>
        <end position="271"/>
    </location>
</feature>
<feature type="region of interest" description="Nuclear localization signal (NLS)" evidence="3">
    <location>
        <begin position="82"/>
        <end position="86"/>
    </location>
</feature>
<feature type="modified residue" description="N6-acetyllysine" evidence="3">
    <location>
        <position position="82"/>
    </location>
</feature>
<feature type="modified residue" description="Phosphoserine" evidence="2">
    <location>
        <position position="87"/>
    </location>
</feature>
<feature type="glycosylation site" description="N-linked (GlcNAc...) asparagine" evidence="4">
    <location>
        <position position="102"/>
    </location>
</feature>
<feature type="glycosylation site" description="N-linked (GlcNAc...) asparagine" evidence="4">
    <location>
        <position position="141"/>
    </location>
</feature>
<gene>
    <name type="primary">IL1A</name>
</gene>
<evidence type="ECO:0000250" key="1"/>
<evidence type="ECO:0000250" key="2">
    <source>
        <dbReference type="UniProtKB" id="P01582"/>
    </source>
</evidence>
<evidence type="ECO:0000250" key="3">
    <source>
        <dbReference type="UniProtKB" id="P01583"/>
    </source>
</evidence>
<evidence type="ECO:0000255" key="4"/>
<evidence type="ECO:0000305" key="5"/>
<proteinExistence type="evidence at transcript level"/>
<organism>
    <name type="scientific">Cercocebus atys</name>
    <name type="common">Sooty mangabey</name>
    <name type="synonym">Cercocebus torquatus atys</name>
    <dbReference type="NCBI Taxonomy" id="9531"/>
    <lineage>
        <taxon>Eukaryota</taxon>
        <taxon>Metazoa</taxon>
        <taxon>Chordata</taxon>
        <taxon>Craniata</taxon>
        <taxon>Vertebrata</taxon>
        <taxon>Euteleostomi</taxon>
        <taxon>Mammalia</taxon>
        <taxon>Eutheria</taxon>
        <taxon>Euarchontoglires</taxon>
        <taxon>Primates</taxon>
        <taxon>Haplorrhini</taxon>
        <taxon>Catarrhini</taxon>
        <taxon>Cercopithecidae</taxon>
        <taxon>Cercopithecinae</taxon>
        <taxon>Cercocebus</taxon>
    </lineage>
</organism>
<comment type="function">
    <text evidence="3">Cytokine constitutively present intracellularly in nearly all resting non-hematopoietic cells that plays an important role in inflammation and bridges the innate and adaptive immune systems. After binding to its receptor IL1R1 together with its accessory protein IL1RAP, forms the high affinity interleukin-1 receptor complex. Signaling involves the recruitment of adapter molecules such as MYD88, IRAK1 or IRAK4. In turn, mediates the activation of NF-kappa-B and the three MAPK pathways p38, p42/p44 and JNK pathways. Within the cell, acts as an alarmin and cell death results in its liberation in the extracellular space after disruption of the cell membrane to induce inflammation and alert the host to injury or damage. In addition to its role as a danger signal, which occurs when the cytokine is passively released by cell necrosis, directly senses DNA damage and acts as signal for genotoxic stress without loss of cell integrity.</text>
</comment>
<comment type="subunit">
    <text evidence="3">Monomer. Interacts with TMED10; the interaction mediates the translocation from the cytoplasm into the ERGIC (endoplasmic reticulum-Golgi intermediate compartment) and thereby secretion. Interacts with IL1R1. Interacts with S100A13; this interaction is the first step in the export of IL1A, followed by direct translocation of this complex across the plasma membrane.</text>
</comment>
<comment type="subcellular location">
    <subcellularLocation>
        <location evidence="3">Nucleus</location>
    </subcellularLocation>
    <subcellularLocation>
        <location evidence="3">Cytoplasm</location>
    </subcellularLocation>
    <subcellularLocation>
        <location evidence="3">Secreted</location>
    </subcellularLocation>
    <text evidence="3">The lack of a specific hydrophobic segment in the precursor sequence suggests that IL-1 is released by damaged cells or is secreted by a mechanism differing from that used for other secretory proteins. The secretion is dependent on protein unfolding and facilitated by the cargo receptor TMED10; it results in protein translocation from the cytoplasm into the ERGIC (endoplasmic reticulum-Golgi intermediate compartment) followed by vesicle entry and secretion. Recruited to DNA damage sites and secreted after genotoxic stress.</text>
</comment>
<comment type="domain">
    <text>The similarity among the IL-1 precursors suggests that the amino ends of these proteins serve some as yet undefined function.</text>
</comment>
<comment type="PTM">
    <text evidence="3">Acetylated within its nuclear localization sequence, which impacts subcellular localization.</text>
</comment>
<comment type="PTM">
    <text evidence="3">Proteolytic processed by CAPN1 in a calcium-dependent manner. Cleavage from 31 kDa precursor to 18 kDa biologically active molecules.</text>
</comment>
<comment type="PTM">
    <text evidence="3">Phosphorylated. Phosphorylation greatly enhances susceptibility to digestion and promotes the conversion of pre-IL1A alpha to the biologically active IL1A.</text>
</comment>
<comment type="similarity">
    <text evidence="5">Belongs to the IL-1 family.</text>
</comment>